<feature type="chain" id="PRO_0000333256" description="WD repeat-containing protein 64">
    <location>
        <begin position="1"/>
        <end position="1081"/>
    </location>
</feature>
<feature type="repeat" description="WD 1">
    <location>
        <begin position="102"/>
        <end position="152"/>
    </location>
</feature>
<feature type="repeat" description="WD 2">
    <location>
        <begin position="153"/>
        <end position="198"/>
    </location>
</feature>
<feature type="repeat" description="WD 3">
    <location>
        <begin position="199"/>
        <end position="265"/>
    </location>
</feature>
<feature type="repeat" description="WD 4">
    <location>
        <begin position="266"/>
        <end position="314"/>
    </location>
</feature>
<feature type="repeat" description="WD 5">
    <location>
        <begin position="315"/>
        <end position="356"/>
    </location>
</feature>
<feature type="repeat" description="WD 6">
    <location>
        <begin position="357"/>
        <end position="400"/>
    </location>
</feature>
<feature type="repeat" description="WD 7">
    <location>
        <begin position="401"/>
        <end position="444"/>
    </location>
</feature>
<feature type="repeat" description="WD 8">
    <location>
        <begin position="445"/>
        <end position="488"/>
    </location>
</feature>
<feature type="repeat" description="WD 9">
    <location>
        <begin position="489"/>
        <end position="532"/>
    </location>
</feature>
<feature type="repeat" description="WD 10">
    <location>
        <begin position="533"/>
        <end position="631"/>
    </location>
</feature>
<feature type="repeat" description="WD 11">
    <location>
        <begin position="632"/>
        <end position="740"/>
    </location>
</feature>
<feature type="repeat" description="WD 12">
    <location>
        <begin position="741"/>
        <end position="803"/>
    </location>
</feature>
<feature type="repeat" description="WD 13">
    <location>
        <begin position="804"/>
        <end position="857"/>
    </location>
</feature>
<feature type="repeat" description="WD 14">
    <location>
        <begin position="858"/>
        <end position="895"/>
    </location>
</feature>
<feature type="region of interest" description="Disordered" evidence="1">
    <location>
        <begin position="726"/>
        <end position="757"/>
    </location>
</feature>
<feature type="region of interest" description="Disordered" evidence="1">
    <location>
        <begin position="1036"/>
        <end position="1060"/>
    </location>
</feature>
<feature type="compositionally biased region" description="Low complexity" evidence="1">
    <location>
        <begin position="726"/>
        <end position="745"/>
    </location>
</feature>
<feature type="compositionally biased region" description="Basic and acidic residues" evidence="1">
    <location>
        <begin position="746"/>
        <end position="756"/>
    </location>
</feature>
<feature type="compositionally biased region" description="Basic residues" evidence="1">
    <location>
        <begin position="1043"/>
        <end position="1060"/>
    </location>
</feature>
<feature type="splice variant" id="VSP_033509" description="In isoform 2." evidence="2">
    <location>
        <begin position="669"/>
        <end position="835"/>
    </location>
</feature>
<feature type="sequence variant" id="VAR_043138" description="In dbSNP:rs12095445.">
    <original>R</original>
    <variation>Q</variation>
    <location>
        <position position="647"/>
    </location>
</feature>
<feature type="sequence variant" id="VAR_043139" description="In dbSNP:rs12074374.">
    <original>R</original>
    <variation>W</variation>
    <location>
        <position position="952"/>
    </location>
</feature>
<feature type="sequence conflict" description="In Ref. 3; BAB71525." evidence="3" ref="3">
    <original>P</original>
    <variation>S</variation>
    <location>
        <position position="699"/>
    </location>
</feature>
<feature type="sequence conflict" description="In Ref. 2; AAP92796." evidence="3" ref="2">
    <original>AP</original>
    <variation>VT</variation>
    <location>
        <begin position="1055"/>
        <end position="1056"/>
    </location>
</feature>
<accession>B1ANS9</accession>
<accession>B1ANT0</accession>
<accession>Q7Z573</accession>
<accession>Q96LY9</accession>
<dbReference type="EMBL" id="AL365366">
    <property type="status" value="NOT_ANNOTATED_CDS"/>
    <property type="molecule type" value="Genomic_DNA"/>
</dbReference>
<dbReference type="EMBL" id="BX248405">
    <property type="status" value="NOT_ANNOTATED_CDS"/>
    <property type="molecule type" value="Genomic_DNA"/>
</dbReference>
<dbReference type="EMBL" id="BX322532">
    <property type="status" value="NOT_ANNOTATED_CDS"/>
    <property type="molecule type" value="Genomic_DNA"/>
</dbReference>
<dbReference type="EMBL" id="AY327404">
    <property type="protein sequence ID" value="AAP92796.1"/>
    <property type="status" value="ALT_INIT"/>
    <property type="molecule type" value="mRNA"/>
</dbReference>
<dbReference type="EMBL" id="AK057540">
    <property type="protein sequence ID" value="BAB71525.1"/>
    <property type="status" value="ALT_INIT"/>
    <property type="molecule type" value="mRNA"/>
</dbReference>
<dbReference type="RefSeq" id="NP_653226.4">
    <property type="nucleotide sequence ID" value="NM_144625.4"/>
</dbReference>
<dbReference type="BioGRID" id="126090">
    <property type="interactions" value="16"/>
</dbReference>
<dbReference type="FunCoup" id="B1ANS9">
    <property type="interactions" value="181"/>
</dbReference>
<dbReference type="IntAct" id="B1ANS9">
    <property type="interactions" value="1"/>
</dbReference>
<dbReference type="STRING" id="9606.ENSP00000355510"/>
<dbReference type="iPTMnet" id="B1ANS9"/>
<dbReference type="PhosphoSitePlus" id="B1ANS9"/>
<dbReference type="BioMuta" id="WDR64"/>
<dbReference type="jPOST" id="B1ANS9"/>
<dbReference type="MassIVE" id="B1ANS9"/>
<dbReference type="PaxDb" id="9606-ENSP00000355510"/>
<dbReference type="PeptideAtlas" id="B1ANS9"/>
<dbReference type="ProteomicsDB" id="3269">
    <molecule id="B1ANS9-1"/>
</dbReference>
<dbReference type="ProteomicsDB" id="3270">
    <molecule id="B1ANS9-2"/>
</dbReference>
<dbReference type="Antibodypedia" id="52507">
    <property type="antibodies" value="40 antibodies from 11 providers"/>
</dbReference>
<dbReference type="DNASU" id="128025"/>
<dbReference type="Ensembl" id="ENST00000366552.6">
    <molecule id="B1ANS9-1"/>
    <property type="protein sequence ID" value="ENSP00000355510.2"/>
    <property type="gene ID" value="ENSG00000162843.18"/>
</dbReference>
<dbReference type="UCSC" id="uc001hzg.3">
    <molecule id="B1ANS9-1"/>
    <property type="organism name" value="human"/>
</dbReference>
<dbReference type="AGR" id="HGNC:26570"/>
<dbReference type="GeneCards" id="WDR64"/>
<dbReference type="HGNC" id="HGNC:26570">
    <property type="gene designation" value="WDR64"/>
</dbReference>
<dbReference type="HPA" id="ENSG00000162843">
    <property type="expression patterns" value="Tissue enriched (testis)"/>
</dbReference>
<dbReference type="neXtProt" id="NX_B1ANS9"/>
<dbReference type="OpenTargets" id="ENSG00000162843"/>
<dbReference type="PharmGKB" id="PA142670597"/>
<dbReference type="VEuPathDB" id="HostDB:ENSG00000162843"/>
<dbReference type="eggNOG" id="KOG0281">
    <property type="taxonomic scope" value="Eukaryota"/>
</dbReference>
<dbReference type="eggNOG" id="KOG0642">
    <property type="taxonomic scope" value="Eukaryota"/>
</dbReference>
<dbReference type="GeneTree" id="ENSGT00940000160037"/>
<dbReference type="HOGENOM" id="CLU_011653_2_0_1"/>
<dbReference type="InParanoid" id="B1ANS9"/>
<dbReference type="OMA" id="VIDTWPL"/>
<dbReference type="OrthoDB" id="5980302at2759"/>
<dbReference type="PAN-GO" id="B1ANS9">
    <property type="GO annotations" value="0 GO annotations based on evolutionary models"/>
</dbReference>
<dbReference type="PhylomeDB" id="B1ANS9"/>
<dbReference type="TreeFam" id="TF324700"/>
<dbReference type="PathwayCommons" id="B1ANS9"/>
<dbReference type="SignaLink" id="B1ANS9"/>
<dbReference type="BioGRID-ORCS" id="128025">
    <property type="hits" value="5 hits in 249 CRISPR screens"/>
</dbReference>
<dbReference type="ChiTaRS" id="WDR64">
    <property type="organism name" value="human"/>
</dbReference>
<dbReference type="GenomeRNAi" id="128025"/>
<dbReference type="Pharos" id="B1ANS9">
    <property type="development level" value="Tdark"/>
</dbReference>
<dbReference type="PRO" id="PR:B1ANS9"/>
<dbReference type="Proteomes" id="UP000005640">
    <property type="component" value="Chromosome 1"/>
</dbReference>
<dbReference type="RNAct" id="B1ANS9">
    <property type="molecule type" value="protein"/>
</dbReference>
<dbReference type="Bgee" id="ENSG00000162843">
    <property type="expression patterns" value="Expressed in buccal mucosa cell and 85 other cell types or tissues"/>
</dbReference>
<dbReference type="ExpressionAtlas" id="B1ANS9">
    <property type="expression patterns" value="baseline and differential"/>
</dbReference>
<dbReference type="Gene3D" id="2.130.10.10">
    <property type="entry name" value="YVTN repeat-like/Quinoprotein amine dehydrogenase"/>
    <property type="match status" value="3"/>
</dbReference>
<dbReference type="InterPro" id="IPR051242">
    <property type="entry name" value="WD-EF-hand_domain"/>
</dbReference>
<dbReference type="InterPro" id="IPR015943">
    <property type="entry name" value="WD40/YVTN_repeat-like_dom_sf"/>
</dbReference>
<dbReference type="InterPro" id="IPR036322">
    <property type="entry name" value="WD40_repeat_dom_sf"/>
</dbReference>
<dbReference type="InterPro" id="IPR001680">
    <property type="entry name" value="WD40_rpt"/>
</dbReference>
<dbReference type="PANTHER" id="PTHR44324:SF2">
    <property type="entry name" value="WD REPEAT-CONTAINING PROTEIN 64"/>
    <property type="match status" value="1"/>
</dbReference>
<dbReference type="PANTHER" id="PTHR44324">
    <property type="entry name" value="WD40 REPEAT DOMAIN 95"/>
    <property type="match status" value="1"/>
</dbReference>
<dbReference type="Pfam" id="PF00400">
    <property type="entry name" value="WD40"/>
    <property type="match status" value="1"/>
</dbReference>
<dbReference type="SMART" id="SM00320">
    <property type="entry name" value="WD40"/>
    <property type="match status" value="8"/>
</dbReference>
<dbReference type="SUPFAM" id="SSF50978">
    <property type="entry name" value="WD40 repeat-like"/>
    <property type="match status" value="2"/>
</dbReference>
<dbReference type="PROSITE" id="PS00678">
    <property type="entry name" value="WD_REPEATS_1"/>
    <property type="match status" value="1"/>
</dbReference>
<dbReference type="PROSITE" id="PS50082">
    <property type="entry name" value="WD_REPEATS_2"/>
    <property type="match status" value="3"/>
</dbReference>
<dbReference type="PROSITE" id="PS50294">
    <property type="entry name" value="WD_REPEATS_REGION"/>
    <property type="match status" value="2"/>
</dbReference>
<evidence type="ECO:0000256" key="1">
    <source>
        <dbReference type="SAM" id="MobiDB-lite"/>
    </source>
</evidence>
<evidence type="ECO:0000303" key="2">
    <source ref="2"/>
</evidence>
<evidence type="ECO:0000305" key="3"/>
<keyword id="KW-0025">Alternative splicing</keyword>
<keyword id="KW-1267">Proteomics identification</keyword>
<keyword id="KW-1185">Reference proteome</keyword>
<keyword id="KW-0677">Repeat</keyword>
<keyword id="KW-0853">WD repeat</keyword>
<gene>
    <name type="primary">WDR64</name>
</gene>
<sequence length="1081" mass="123631">MDIRKEKRLNMALQMSNFKKALNRFEKLVEQTAAQKRDERAGLFIHKEDAIGYDKFYASVQKLFGPDVKNQDVKRFYRKLCNNTDASADWCEIFGYFSSEEDPIASQLDEENLVFFVSRKRRILISGSRRRDVIKSIVKIPHLDLLITATQKGLITVFNNQDTSWITGCDYLLQLKRIVATTERTIIVWDYKAQGSSQENYFVIKPMDHCLLCVCVVPLPDHLCRDDILLGDDGGFVNRFTVNSDDFGIKQAKSKRKLQNQVLDSKNFKSVKRKLHNDWVMKIRYISALNCFGSCSLDSNHSLVLESLKRLEDNLPVREFSMPRGANTFCYCVKANVIVTGGDDKVIRLWHPNISTKPVGKLVGHMFSIAEIVTNEKDQHVVSLSSAKVFRVWDIQTLSLLQVFHDSQGGPGDMQIYSMIYDANHGMLITGSSVMDMYPLTRMIQDTKQVPHTHEREINVMLYNKYFHQVLTICSESIIRVWELETGLQVYQILEPHGFNTEVTSAAVDESGFLFATGAYNGTVRIWDFGSGQEMKVLPEGKDWKEDEHCLRRLIFLKAQEKHQQLVLALERNGTIKMIQGKEDDIYLMVIWELPDVVPFLQDGKHAVHLRMSTRDRNMAIPFPDVELIVERNFSQPTDNPTMDLLRVNCIDLLQVEGYNLIAAGTLNGVIILWNFVTSTVKKVYRPEDCFTVNPDLHPKHFKINDILFLFRTPECARRSSQDSICSSSQCESSKGPQSSKGSKQSIHDSEVKGEQTDVMVGKQQPMDKKHPGIANLPEAQPPILVTAHEDGHLRLWTLEGRLLKDMLPFTKHSAISLTSLYTDSCTRILLAGNVEGHVILCNISSFLDPPHDEKKFKQLLSWRAHSLEIIQVIYVEEKQVVLTASIDGSVRLWHALNGHYCGYFGQRRLFELSQTRDFILPCDVTEYPIEIKEESKFTEKQKYEYPLIFDREKWRKMSSVSLLFKRTPPKAFEVEQDFKFFKSLSSPKIRRYPLEGFVTENREAGIVFGSLPIYSISSPTSLRFLPLIGVEAQKDSSDGITGKKKGGHVQREKAPRRRSLKKNLVPQINLASSFFPAIPK</sequence>
<name>WDR64_HUMAN</name>
<organism>
    <name type="scientific">Homo sapiens</name>
    <name type="common">Human</name>
    <dbReference type="NCBI Taxonomy" id="9606"/>
    <lineage>
        <taxon>Eukaryota</taxon>
        <taxon>Metazoa</taxon>
        <taxon>Chordata</taxon>
        <taxon>Craniata</taxon>
        <taxon>Vertebrata</taxon>
        <taxon>Euteleostomi</taxon>
        <taxon>Mammalia</taxon>
        <taxon>Eutheria</taxon>
        <taxon>Euarchontoglires</taxon>
        <taxon>Primates</taxon>
        <taxon>Haplorrhini</taxon>
        <taxon>Catarrhini</taxon>
        <taxon>Hominidae</taxon>
        <taxon>Homo</taxon>
    </lineage>
</organism>
<proteinExistence type="evidence at protein level"/>
<reference key="1">
    <citation type="journal article" date="2006" name="Nature">
        <title>The DNA sequence and biological annotation of human chromosome 1.</title>
        <authorList>
            <person name="Gregory S.G."/>
            <person name="Barlow K.F."/>
            <person name="McLay K.E."/>
            <person name="Kaul R."/>
            <person name="Swarbreck D."/>
            <person name="Dunham A."/>
            <person name="Scott C.E."/>
            <person name="Howe K.L."/>
            <person name="Woodfine K."/>
            <person name="Spencer C.C.A."/>
            <person name="Jones M.C."/>
            <person name="Gillson C."/>
            <person name="Searle S."/>
            <person name="Zhou Y."/>
            <person name="Kokocinski F."/>
            <person name="McDonald L."/>
            <person name="Evans R."/>
            <person name="Phillips K."/>
            <person name="Atkinson A."/>
            <person name="Cooper R."/>
            <person name="Jones C."/>
            <person name="Hall R.E."/>
            <person name="Andrews T.D."/>
            <person name="Lloyd C."/>
            <person name="Ainscough R."/>
            <person name="Almeida J.P."/>
            <person name="Ambrose K.D."/>
            <person name="Anderson F."/>
            <person name="Andrew R.W."/>
            <person name="Ashwell R.I.S."/>
            <person name="Aubin K."/>
            <person name="Babbage A.K."/>
            <person name="Bagguley C.L."/>
            <person name="Bailey J."/>
            <person name="Beasley H."/>
            <person name="Bethel G."/>
            <person name="Bird C.P."/>
            <person name="Bray-Allen S."/>
            <person name="Brown J.Y."/>
            <person name="Brown A.J."/>
            <person name="Buckley D."/>
            <person name="Burton J."/>
            <person name="Bye J."/>
            <person name="Carder C."/>
            <person name="Chapman J.C."/>
            <person name="Clark S.Y."/>
            <person name="Clarke G."/>
            <person name="Clee C."/>
            <person name="Cobley V."/>
            <person name="Collier R.E."/>
            <person name="Corby N."/>
            <person name="Coville G.J."/>
            <person name="Davies J."/>
            <person name="Deadman R."/>
            <person name="Dunn M."/>
            <person name="Earthrowl M."/>
            <person name="Ellington A.G."/>
            <person name="Errington H."/>
            <person name="Frankish A."/>
            <person name="Frankland J."/>
            <person name="French L."/>
            <person name="Garner P."/>
            <person name="Garnett J."/>
            <person name="Gay L."/>
            <person name="Ghori M.R.J."/>
            <person name="Gibson R."/>
            <person name="Gilby L.M."/>
            <person name="Gillett W."/>
            <person name="Glithero R.J."/>
            <person name="Grafham D.V."/>
            <person name="Griffiths C."/>
            <person name="Griffiths-Jones S."/>
            <person name="Grocock R."/>
            <person name="Hammond S."/>
            <person name="Harrison E.S.I."/>
            <person name="Hart E."/>
            <person name="Haugen E."/>
            <person name="Heath P.D."/>
            <person name="Holmes S."/>
            <person name="Holt K."/>
            <person name="Howden P.J."/>
            <person name="Hunt A.R."/>
            <person name="Hunt S.E."/>
            <person name="Hunter G."/>
            <person name="Isherwood J."/>
            <person name="James R."/>
            <person name="Johnson C."/>
            <person name="Johnson D."/>
            <person name="Joy A."/>
            <person name="Kay M."/>
            <person name="Kershaw J.K."/>
            <person name="Kibukawa M."/>
            <person name="Kimberley A.M."/>
            <person name="King A."/>
            <person name="Knights A.J."/>
            <person name="Lad H."/>
            <person name="Laird G."/>
            <person name="Lawlor S."/>
            <person name="Leongamornlert D.A."/>
            <person name="Lloyd D.M."/>
            <person name="Loveland J."/>
            <person name="Lovell J."/>
            <person name="Lush M.J."/>
            <person name="Lyne R."/>
            <person name="Martin S."/>
            <person name="Mashreghi-Mohammadi M."/>
            <person name="Matthews L."/>
            <person name="Matthews N.S.W."/>
            <person name="McLaren S."/>
            <person name="Milne S."/>
            <person name="Mistry S."/>
            <person name="Moore M.J.F."/>
            <person name="Nickerson T."/>
            <person name="O'Dell C.N."/>
            <person name="Oliver K."/>
            <person name="Palmeiri A."/>
            <person name="Palmer S.A."/>
            <person name="Parker A."/>
            <person name="Patel D."/>
            <person name="Pearce A.V."/>
            <person name="Peck A.I."/>
            <person name="Pelan S."/>
            <person name="Phelps K."/>
            <person name="Phillimore B.J."/>
            <person name="Plumb R."/>
            <person name="Rajan J."/>
            <person name="Raymond C."/>
            <person name="Rouse G."/>
            <person name="Saenphimmachak C."/>
            <person name="Sehra H.K."/>
            <person name="Sheridan E."/>
            <person name="Shownkeen R."/>
            <person name="Sims S."/>
            <person name="Skuce C.D."/>
            <person name="Smith M."/>
            <person name="Steward C."/>
            <person name="Subramanian S."/>
            <person name="Sycamore N."/>
            <person name="Tracey A."/>
            <person name="Tromans A."/>
            <person name="Van Helmond Z."/>
            <person name="Wall M."/>
            <person name="Wallis J.M."/>
            <person name="White S."/>
            <person name="Whitehead S.L."/>
            <person name="Wilkinson J.E."/>
            <person name="Willey D.L."/>
            <person name="Williams H."/>
            <person name="Wilming L."/>
            <person name="Wray P.W."/>
            <person name="Wu Z."/>
            <person name="Coulson A."/>
            <person name="Vaudin M."/>
            <person name="Sulston J.E."/>
            <person name="Durbin R.M."/>
            <person name="Hubbard T."/>
            <person name="Wooster R."/>
            <person name="Dunham I."/>
            <person name="Carter N.P."/>
            <person name="McVean G."/>
            <person name="Ross M.T."/>
            <person name="Harrow J."/>
            <person name="Olson M.V."/>
            <person name="Beck S."/>
            <person name="Rogers J."/>
            <person name="Bentley D.R."/>
        </authorList>
    </citation>
    <scope>NUCLEOTIDE SEQUENCE [LARGE SCALE GENOMIC DNA]</scope>
</reference>
<reference key="2">
    <citation type="submission" date="2003-06" db="EMBL/GenBank/DDBJ databases">
        <authorList>
            <person name="Shan Y.X."/>
            <person name="Yu L."/>
        </authorList>
    </citation>
    <scope>NUCLEOTIDE SEQUENCE [LARGE SCALE MRNA] OF 230-1081 (ISOFORM 2)</scope>
</reference>
<reference key="3">
    <citation type="journal article" date="2004" name="Nat. Genet.">
        <title>Complete sequencing and characterization of 21,243 full-length human cDNAs.</title>
        <authorList>
            <person name="Ota T."/>
            <person name="Suzuki Y."/>
            <person name="Nishikawa T."/>
            <person name="Otsuki T."/>
            <person name="Sugiyama T."/>
            <person name="Irie R."/>
            <person name="Wakamatsu A."/>
            <person name="Hayashi K."/>
            <person name="Sato H."/>
            <person name="Nagai K."/>
            <person name="Kimura K."/>
            <person name="Makita H."/>
            <person name="Sekine M."/>
            <person name="Obayashi M."/>
            <person name="Nishi T."/>
            <person name="Shibahara T."/>
            <person name="Tanaka T."/>
            <person name="Ishii S."/>
            <person name="Yamamoto J."/>
            <person name="Saito K."/>
            <person name="Kawai Y."/>
            <person name="Isono Y."/>
            <person name="Nakamura Y."/>
            <person name="Nagahari K."/>
            <person name="Murakami K."/>
            <person name="Yasuda T."/>
            <person name="Iwayanagi T."/>
            <person name="Wagatsuma M."/>
            <person name="Shiratori A."/>
            <person name="Sudo H."/>
            <person name="Hosoiri T."/>
            <person name="Kaku Y."/>
            <person name="Kodaira H."/>
            <person name="Kondo H."/>
            <person name="Sugawara M."/>
            <person name="Takahashi M."/>
            <person name="Kanda K."/>
            <person name="Yokoi T."/>
            <person name="Furuya T."/>
            <person name="Kikkawa E."/>
            <person name="Omura Y."/>
            <person name="Abe K."/>
            <person name="Kamihara K."/>
            <person name="Katsuta N."/>
            <person name="Sato K."/>
            <person name="Tanikawa M."/>
            <person name="Yamazaki M."/>
            <person name="Ninomiya K."/>
            <person name="Ishibashi T."/>
            <person name="Yamashita H."/>
            <person name="Murakawa K."/>
            <person name="Fujimori K."/>
            <person name="Tanai H."/>
            <person name="Kimata M."/>
            <person name="Watanabe M."/>
            <person name="Hiraoka S."/>
            <person name="Chiba Y."/>
            <person name="Ishida S."/>
            <person name="Ono Y."/>
            <person name="Takiguchi S."/>
            <person name="Watanabe S."/>
            <person name="Yosida M."/>
            <person name="Hotuta T."/>
            <person name="Kusano J."/>
            <person name="Kanehori K."/>
            <person name="Takahashi-Fujii A."/>
            <person name="Hara H."/>
            <person name="Tanase T.-O."/>
            <person name="Nomura Y."/>
            <person name="Togiya S."/>
            <person name="Komai F."/>
            <person name="Hara R."/>
            <person name="Takeuchi K."/>
            <person name="Arita M."/>
            <person name="Imose N."/>
            <person name="Musashino K."/>
            <person name="Yuuki H."/>
            <person name="Oshima A."/>
            <person name="Sasaki N."/>
            <person name="Aotsuka S."/>
            <person name="Yoshikawa Y."/>
            <person name="Matsunawa H."/>
            <person name="Ichihara T."/>
            <person name="Shiohata N."/>
            <person name="Sano S."/>
            <person name="Moriya S."/>
            <person name="Momiyama H."/>
            <person name="Satoh N."/>
            <person name="Takami S."/>
            <person name="Terashima Y."/>
            <person name="Suzuki O."/>
            <person name="Nakagawa S."/>
            <person name="Senoh A."/>
            <person name="Mizoguchi H."/>
            <person name="Goto Y."/>
            <person name="Shimizu F."/>
            <person name="Wakebe H."/>
            <person name="Hishigaki H."/>
            <person name="Watanabe T."/>
            <person name="Sugiyama A."/>
            <person name="Takemoto M."/>
            <person name="Kawakami B."/>
            <person name="Yamazaki M."/>
            <person name="Watanabe K."/>
            <person name="Kumagai A."/>
            <person name="Itakura S."/>
            <person name="Fukuzumi Y."/>
            <person name="Fujimori Y."/>
            <person name="Komiyama M."/>
            <person name="Tashiro H."/>
            <person name="Tanigami A."/>
            <person name="Fujiwara T."/>
            <person name="Ono T."/>
            <person name="Yamada K."/>
            <person name="Fujii Y."/>
            <person name="Ozaki K."/>
            <person name="Hirao M."/>
            <person name="Ohmori Y."/>
            <person name="Kawabata A."/>
            <person name="Hikiji T."/>
            <person name="Kobatake N."/>
            <person name="Inagaki H."/>
            <person name="Ikema Y."/>
            <person name="Okamoto S."/>
            <person name="Okitani R."/>
            <person name="Kawakami T."/>
            <person name="Noguchi S."/>
            <person name="Itoh T."/>
            <person name="Shigeta K."/>
            <person name="Senba T."/>
            <person name="Matsumura K."/>
            <person name="Nakajima Y."/>
            <person name="Mizuno T."/>
            <person name="Morinaga M."/>
            <person name="Sasaki M."/>
            <person name="Togashi T."/>
            <person name="Oyama M."/>
            <person name="Hata H."/>
            <person name="Watanabe M."/>
            <person name="Komatsu T."/>
            <person name="Mizushima-Sugano J."/>
            <person name="Satoh T."/>
            <person name="Shirai Y."/>
            <person name="Takahashi Y."/>
            <person name="Nakagawa K."/>
            <person name="Okumura K."/>
            <person name="Nagase T."/>
            <person name="Nomura N."/>
            <person name="Kikuchi H."/>
            <person name="Masuho Y."/>
            <person name="Yamashita R."/>
            <person name="Nakai K."/>
            <person name="Yada T."/>
            <person name="Nakamura Y."/>
            <person name="Ohara O."/>
            <person name="Isogai T."/>
            <person name="Sugano S."/>
        </authorList>
    </citation>
    <scope>NUCLEOTIDE SEQUENCE [LARGE SCALE MRNA] OF 555-1081 (ISOFORM 1)</scope>
    <source>
        <tissue>Testis</tissue>
    </source>
</reference>
<comment type="alternative products">
    <event type="alternative splicing"/>
    <isoform>
        <id>B1ANS9-1</id>
        <name>1</name>
        <sequence type="displayed"/>
    </isoform>
    <isoform>
        <id>B1ANS9-2</id>
        <name>2</name>
        <sequence type="described" ref="VSP_033509"/>
    </isoform>
</comment>
<comment type="sequence caution" evidence="3">
    <conflict type="erroneous initiation">
        <sequence resource="EMBL-CDS" id="AAP92796"/>
    </conflict>
</comment>
<comment type="sequence caution" evidence="3">
    <conflict type="erroneous initiation">
        <sequence resource="EMBL-CDS" id="BAB71525"/>
    </conflict>
</comment>
<protein>
    <recommendedName>
        <fullName>WD repeat-containing protein 64</fullName>
    </recommendedName>
</protein>